<organism>
    <name type="scientific">Schizosaccharomyces pombe (strain 972 / ATCC 24843)</name>
    <name type="common">Fission yeast</name>
    <dbReference type="NCBI Taxonomy" id="284812"/>
    <lineage>
        <taxon>Eukaryota</taxon>
        <taxon>Fungi</taxon>
        <taxon>Dikarya</taxon>
        <taxon>Ascomycota</taxon>
        <taxon>Taphrinomycotina</taxon>
        <taxon>Schizosaccharomycetes</taxon>
        <taxon>Schizosaccharomycetales</taxon>
        <taxon>Schizosaccharomycetaceae</taxon>
        <taxon>Schizosaccharomyces</taxon>
    </lineage>
</organism>
<gene>
    <name type="ORF">SPBC21C3.06</name>
</gene>
<accession>Q9P7L7</accession>
<sequence length="122" mass="13837">MAFDKLANVATVDAIFAISSSTFLWSTWVLQRTILKRPNFFSPNPVVEKMVHPTLITWKLFSFTSVLTVSTFTFASCLIMRTIGVENIKEFGLYAREKLSFARAKPVKDDITSFPNHKISIT</sequence>
<evidence type="ECO:0000255" key="1"/>
<evidence type="ECO:0000269" key="2">
    <source>
    </source>
</evidence>
<evidence type="ECO:0000305" key="3"/>
<keyword id="KW-0963">Cytoplasm</keyword>
<keyword id="KW-0472">Membrane</keyword>
<keyword id="KW-1185">Reference proteome</keyword>
<keyword id="KW-0812">Transmembrane</keyword>
<keyword id="KW-1133">Transmembrane helix</keyword>
<protein>
    <recommendedName>
        <fullName>Uncharacterized membrane protein C21C3.06</fullName>
    </recommendedName>
</protein>
<feature type="chain" id="PRO_0000304109" description="Uncharacterized membrane protein C21C3.06">
    <location>
        <begin position="1"/>
        <end position="122"/>
    </location>
</feature>
<feature type="transmembrane region" description="Helical" evidence="1">
    <location>
        <begin position="9"/>
        <end position="29"/>
    </location>
</feature>
<feature type="transmembrane region" description="Helical" evidence="1">
    <location>
        <begin position="60"/>
        <end position="80"/>
    </location>
</feature>
<reference key="1">
    <citation type="journal article" date="2002" name="Nature">
        <title>The genome sequence of Schizosaccharomyces pombe.</title>
        <authorList>
            <person name="Wood V."/>
            <person name="Gwilliam R."/>
            <person name="Rajandream M.A."/>
            <person name="Lyne M.H."/>
            <person name="Lyne R."/>
            <person name="Stewart A."/>
            <person name="Sgouros J.G."/>
            <person name="Peat N."/>
            <person name="Hayles J."/>
            <person name="Baker S.G."/>
            <person name="Basham D."/>
            <person name="Bowman S."/>
            <person name="Brooks K."/>
            <person name="Brown D."/>
            <person name="Brown S."/>
            <person name="Chillingworth T."/>
            <person name="Churcher C.M."/>
            <person name="Collins M."/>
            <person name="Connor R."/>
            <person name="Cronin A."/>
            <person name="Davis P."/>
            <person name="Feltwell T."/>
            <person name="Fraser A."/>
            <person name="Gentles S."/>
            <person name="Goble A."/>
            <person name="Hamlin N."/>
            <person name="Harris D.E."/>
            <person name="Hidalgo J."/>
            <person name="Hodgson G."/>
            <person name="Holroyd S."/>
            <person name="Hornsby T."/>
            <person name="Howarth S."/>
            <person name="Huckle E.J."/>
            <person name="Hunt S."/>
            <person name="Jagels K."/>
            <person name="James K.D."/>
            <person name="Jones L."/>
            <person name="Jones M."/>
            <person name="Leather S."/>
            <person name="McDonald S."/>
            <person name="McLean J."/>
            <person name="Mooney P."/>
            <person name="Moule S."/>
            <person name="Mungall K.L."/>
            <person name="Murphy L.D."/>
            <person name="Niblett D."/>
            <person name="Odell C."/>
            <person name="Oliver K."/>
            <person name="O'Neil S."/>
            <person name="Pearson D."/>
            <person name="Quail M.A."/>
            <person name="Rabbinowitsch E."/>
            <person name="Rutherford K.M."/>
            <person name="Rutter S."/>
            <person name="Saunders D."/>
            <person name="Seeger K."/>
            <person name="Sharp S."/>
            <person name="Skelton J."/>
            <person name="Simmonds M.N."/>
            <person name="Squares R."/>
            <person name="Squares S."/>
            <person name="Stevens K."/>
            <person name="Taylor K."/>
            <person name="Taylor R.G."/>
            <person name="Tivey A."/>
            <person name="Walsh S.V."/>
            <person name="Warren T."/>
            <person name="Whitehead S."/>
            <person name="Woodward J.R."/>
            <person name="Volckaert G."/>
            <person name="Aert R."/>
            <person name="Robben J."/>
            <person name="Grymonprez B."/>
            <person name="Weltjens I."/>
            <person name="Vanstreels E."/>
            <person name="Rieger M."/>
            <person name="Schaefer M."/>
            <person name="Mueller-Auer S."/>
            <person name="Gabel C."/>
            <person name="Fuchs M."/>
            <person name="Duesterhoeft A."/>
            <person name="Fritzc C."/>
            <person name="Holzer E."/>
            <person name="Moestl D."/>
            <person name="Hilbert H."/>
            <person name="Borzym K."/>
            <person name="Langer I."/>
            <person name="Beck A."/>
            <person name="Lehrach H."/>
            <person name="Reinhardt R."/>
            <person name="Pohl T.M."/>
            <person name="Eger P."/>
            <person name="Zimmermann W."/>
            <person name="Wedler H."/>
            <person name="Wambutt R."/>
            <person name="Purnelle B."/>
            <person name="Goffeau A."/>
            <person name="Cadieu E."/>
            <person name="Dreano S."/>
            <person name="Gloux S."/>
            <person name="Lelaure V."/>
            <person name="Mottier S."/>
            <person name="Galibert F."/>
            <person name="Aves S.J."/>
            <person name="Xiang Z."/>
            <person name="Hunt C."/>
            <person name="Moore K."/>
            <person name="Hurst S.M."/>
            <person name="Lucas M."/>
            <person name="Rochet M."/>
            <person name="Gaillardin C."/>
            <person name="Tallada V.A."/>
            <person name="Garzon A."/>
            <person name="Thode G."/>
            <person name="Daga R.R."/>
            <person name="Cruzado L."/>
            <person name="Jimenez J."/>
            <person name="Sanchez M."/>
            <person name="del Rey F."/>
            <person name="Benito J."/>
            <person name="Dominguez A."/>
            <person name="Revuelta J.L."/>
            <person name="Moreno S."/>
            <person name="Armstrong J."/>
            <person name="Forsburg S.L."/>
            <person name="Cerutti L."/>
            <person name="Lowe T."/>
            <person name="McCombie W.R."/>
            <person name="Paulsen I."/>
            <person name="Potashkin J."/>
            <person name="Shpakovski G.V."/>
            <person name="Ussery D."/>
            <person name="Barrell B.G."/>
            <person name="Nurse P."/>
        </authorList>
    </citation>
    <scope>NUCLEOTIDE SEQUENCE [LARGE SCALE GENOMIC DNA]</scope>
    <source>
        <strain>972 / ATCC 24843</strain>
    </source>
</reference>
<reference key="2">
    <citation type="journal article" date="2006" name="Nat. Biotechnol.">
        <title>ORFeome cloning and global analysis of protein localization in the fission yeast Schizosaccharomyces pombe.</title>
        <authorList>
            <person name="Matsuyama A."/>
            <person name="Arai R."/>
            <person name="Yashiroda Y."/>
            <person name="Shirai A."/>
            <person name="Kamata A."/>
            <person name="Sekido S."/>
            <person name="Kobayashi Y."/>
            <person name="Hashimoto A."/>
            <person name="Hamamoto M."/>
            <person name="Hiraoka Y."/>
            <person name="Horinouchi S."/>
            <person name="Yoshida M."/>
        </authorList>
    </citation>
    <scope>SUBCELLULAR LOCATION [LARGE SCALE ANALYSIS]</scope>
</reference>
<proteinExistence type="predicted"/>
<dbReference type="EMBL" id="CU329671">
    <property type="protein sequence ID" value="CAB76042.1"/>
    <property type="molecule type" value="Genomic_DNA"/>
</dbReference>
<dbReference type="PIR" id="T50350">
    <property type="entry name" value="T50350"/>
</dbReference>
<dbReference type="RefSeq" id="NP_596586.1">
    <property type="nucleotide sequence ID" value="NM_001022506.2"/>
</dbReference>
<dbReference type="BioGRID" id="276945">
    <property type="interactions" value="4"/>
</dbReference>
<dbReference type="PaxDb" id="4896-SPBC21C3.06.1"/>
<dbReference type="EnsemblFungi" id="SPBC21C3.06.1">
    <property type="protein sequence ID" value="SPBC21C3.06.1:pep"/>
    <property type="gene ID" value="SPBC21C3.06"/>
</dbReference>
<dbReference type="KEGG" id="spo:2540417"/>
<dbReference type="PomBase" id="SPBC21C3.06"/>
<dbReference type="VEuPathDB" id="FungiDB:SPBC21C3.06"/>
<dbReference type="HOGENOM" id="CLU_2062825_0_0_1"/>
<dbReference type="InParanoid" id="Q9P7L7"/>
<dbReference type="OMA" id="PNDIDAP"/>
<dbReference type="PRO" id="PR:Q9P7L7"/>
<dbReference type="Proteomes" id="UP000002485">
    <property type="component" value="Chromosome II"/>
</dbReference>
<dbReference type="GO" id="GO:0005737">
    <property type="term" value="C:cytoplasm"/>
    <property type="evidence" value="ECO:0007005"/>
    <property type="project" value="PomBase"/>
</dbReference>
<dbReference type="GO" id="GO:0016020">
    <property type="term" value="C:membrane"/>
    <property type="evidence" value="ECO:0007669"/>
    <property type="project" value="UniProtKB-SubCell"/>
</dbReference>
<name>YOS6_SCHPO</name>
<comment type="subcellular location">
    <subcellularLocation>
        <location evidence="2">Cytoplasm</location>
    </subcellularLocation>
    <subcellularLocation>
        <location evidence="3">Membrane</location>
        <topology evidence="3">Multi-pass membrane protein</topology>
    </subcellularLocation>
</comment>